<accession>P0C5Y5</accession>
<organism>
    <name type="scientific">Salmonella typhi</name>
    <dbReference type="NCBI Taxonomy" id="90370"/>
    <lineage>
        <taxon>Bacteria</taxon>
        <taxon>Pseudomonadati</taxon>
        <taxon>Pseudomonadota</taxon>
        <taxon>Gammaproteobacteria</taxon>
        <taxon>Enterobacterales</taxon>
        <taxon>Enterobacteriaceae</taxon>
        <taxon>Salmonella</taxon>
    </lineage>
</organism>
<feature type="chain" id="PRO_0000312525" description="UPF0509 protein YciZ">
    <location>
        <begin position="1"/>
        <end position="59"/>
    </location>
</feature>
<dbReference type="EMBL" id="AL513382">
    <property type="status" value="NOT_ANNOTATED_CDS"/>
    <property type="molecule type" value="Genomic_DNA"/>
</dbReference>
<dbReference type="EMBL" id="AE014613">
    <property type="status" value="NOT_ANNOTATED_CDS"/>
    <property type="molecule type" value="Genomic_DNA"/>
</dbReference>
<dbReference type="RefSeq" id="WP_001279854.1">
    <property type="nucleotide sequence ID" value="NZ_WSUR01000006.1"/>
</dbReference>
<dbReference type="PATRIC" id="fig|90370.929.peg.793"/>
<dbReference type="OMA" id="AQPKAPW"/>
<dbReference type="OrthoDB" id="6561755at2"/>
<dbReference type="Proteomes" id="UP000000541">
    <property type="component" value="Chromosome"/>
</dbReference>
<dbReference type="Proteomes" id="UP000002670">
    <property type="component" value="Chromosome"/>
</dbReference>
<dbReference type="HAMAP" id="MF_01641">
    <property type="entry name" value="UPF0509"/>
    <property type="match status" value="1"/>
</dbReference>
<dbReference type="InterPro" id="IPR020887">
    <property type="entry name" value="UPF0509"/>
</dbReference>
<dbReference type="NCBIfam" id="NF010179">
    <property type="entry name" value="PRK13658.1"/>
    <property type="match status" value="1"/>
</dbReference>
<dbReference type="Pfam" id="PF23675">
    <property type="entry name" value="YciZ"/>
    <property type="match status" value="1"/>
</dbReference>
<reference key="1">
    <citation type="journal article" date="2001" name="Nature">
        <title>Complete genome sequence of a multiple drug resistant Salmonella enterica serovar Typhi CT18.</title>
        <authorList>
            <person name="Parkhill J."/>
            <person name="Dougan G."/>
            <person name="James K.D."/>
            <person name="Thomson N.R."/>
            <person name="Pickard D."/>
            <person name="Wain J."/>
            <person name="Churcher C.M."/>
            <person name="Mungall K.L."/>
            <person name="Bentley S.D."/>
            <person name="Holden M.T.G."/>
            <person name="Sebaihia M."/>
            <person name="Baker S."/>
            <person name="Basham D."/>
            <person name="Brooks K."/>
            <person name="Chillingworth T."/>
            <person name="Connerton P."/>
            <person name="Cronin A."/>
            <person name="Davis P."/>
            <person name="Davies R.M."/>
            <person name="Dowd L."/>
            <person name="White N."/>
            <person name="Farrar J."/>
            <person name="Feltwell T."/>
            <person name="Hamlin N."/>
            <person name="Haque A."/>
            <person name="Hien T.T."/>
            <person name="Holroyd S."/>
            <person name="Jagels K."/>
            <person name="Krogh A."/>
            <person name="Larsen T.S."/>
            <person name="Leather S."/>
            <person name="Moule S."/>
            <person name="O'Gaora P."/>
            <person name="Parry C."/>
            <person name="Quail M.A."/>
            <person name="Rutherford K.M."/>
            <person name="Simmonds M."/>
            <person name="Skelton J."/>
            <person name="Stevens K."/>
            <person name="Whitehead S."/>
            <person name="Barrell B.G."/>
        </authorList>
    </citation>
    <scope>NUCLEOTIDE SEQUENCE [LARGE SCALE GENOMIC DNA]</scope>
    <source>
        <strain>CT18</strain>
    </source>
</reference>
<reference key="2">
    <citation type="journal article" date="2003" name="J. Bacteriol.">
        <title>Comparative genomics of Salmonella enterica serovar Typhi strains Ty2 and CT18.</title>
        <authorList>
            <person name="Deng W."/>
            <person name="Liou S.-R."/>
            <person name="Plunkett G. III"/>
            <person name="Mayhew G.F."/>
            <person name="Rose D.J."/>
            <person name="Burland V."/>
            <person name="Kodoyianni V."/>
            <person name="Schwartz D.C."/>
            <person name="Blattner F.R."/>
        </authorList>
    </citation>
    <scope>NUCLEOTIDE SEQUENCE [LARGE SCALE GENOMIC DNA]</scope>
    <source>
        <strain>ATCC 700931 / Ty2</strain>
    </source>
</reference>
<sequence>MSDIEAQRIAARIDTVLDILVAGDYHSAINNLEILRAELLDQVKDGISPSQAPGSPWEI</sequence>
<proteinExistence type="inferred from homology"/>
<name>YCIZ_SALTI</name>
<evidence type="ECO:0000305" key="1"/>
<protein>
    <recommendedName>
        <fullName>UPF0509 protein YciZ</fullName>
    </recommendedName>
</protein>
<gene>
    <name type="primary">yciZ</name>
    <name type="ordered locus">STY1348</name>
    <name type="ordered locus">t1616.1</name>
</gene>
<comment type="similarity">
    <text evidence="1">Belongs to the UPF0509 family.</text>
</comment>